<protein>
    <recommendedName>
        <fullName evidence="1">Proline--tRNA ligase</fullName>
        <ecNumber evidence="1">6.1.1.15</ecNumber>
    </recommendedName>
    <alternativeName>
        <fullName evidence="1">Prolyl-tRNA synthetase</fullName>
        <shortName evidence="1">ProRS</shortName>
    </alternativeName>
</protein>
<accession>A5CX68</accession>
<sequence>MKTTKLLIPTQKEAPNDAKIISHQLMIRAGLISKLALGLYSYLPIGIRVLQKVENIIRQEMNKSGAQEVLMPIVQPAELWKESGRWNKYGAELLRFIDRHQREFCLGPTHEEVITHLARQYLRSYKQLPMNFYQIQTKFRDEIRPRFGVIRMREFIMKDAYSFHIDEASLQETYEVMYKTYCNIFNRLGLNYRIVLADSGSIGGNTSHEFHVLADSGEDTICFSDKSDYAANIEKVTFFKQEKTCQSTMVESKVLTKEKTSIEDVSKFLNVKKVNCVKILIIKIKDGFKALALRGDHELNEIKIHNLFGDFEFSTNNEIKNLGLKKGFIGIKNLDIDLIVDYSASVLCDFVCGANECDYHLIGVNWQGIKFIDADLRNAVDGDYSPDGKGKLMIKRGIEVGHIFQLGTKYSSVMKANVIGESGKAVTTTMGCYGIGVTRIIAAFIEQNHDDKGIIFSQAIAPFQIVIVPINYNKSTRVKALADRLYQQFIKASIDVLLDDRKEHVGIMFADSELLGIPHRIVISDTHADNGSVEYKARNKTNKIEVKFDDALSFIQTKMI</sequence>
<name>SYP_VESOH</name>
<dbReference type="EC" id="6.1.1.15" evidence="1"/>
<dbReference type="EMBL" id="AP009247">
    <property type="protein sequence ID" value="BAF61454.1"/>
    <property type="molecule type" value="Genomic_DNA"/>
</dbReference>
<dbReference type="RefSeq" id="WP_011929724.1">
    <property type="nucleotide sequence ID" value="NC_009465.1"/>
</dbReference>
<dbReference type="SMR" id="A5CX68"/>
<dbReference type="STRING" id="412965.COSY_0329"/>
<dbReference type="KEGG" id="vok:COSY_0329"/>
<dbReference type="eggNOG" id="COG0442">
    <property type="taxonomic scope" value="Bacteria"/>
</dbReference>
<dbReference type="HOGENOM" id="CLU_016739_0_0_6"/>
<dbReference type="OrthoDB" id="9809052at2"/>
<dbReference type="Proteomes" id="UP000000247">
    <property type="component" value="Chromosome"/>
</dbReference>
<dbReference type="GO" id="GO:0005829">
    <property type="term" value="C:cytosol"/>
    <property type="evidence" value="ECO:0007669"/>
    <property type="project" value="TreeGrafter"/>
</dbReference>
<dbReference type="GO" id="GO:0002161">
    <property type="term" value="F:aminoacyl-tRNA deacylase activity"/>
    <property type="evidence" value="ECO:0007669"/>
    <property type="project" value="InterPro"/>
</dbReference>
<dbReference type="GO" id="GO:0005524">
    <property type="term" value="F:ATP binding"/>
    <property type="evidence" value="ECO:0007669"/>
    <property type="project" value="UniProtKB-UniRule"/>
</dbReference>
<dbReference type="GO" id="GO:0004827">
    <property type="term" value="F:proline-tRNA ligase activity"/>
    <property type="evidence" value="ECO:0007669"/>
    <property type="project" value="UniProtKB-UniRule"/>
</dbReference>
<dbReference type="GO" id="GO:0006433">
    <property type="term" value="P:prolyl-tRNA aminoacylation"/>
    <property type="evidence" value="ECO:0007669"/>
    <property type="project" value="UniProtKB-UniRule"/>
</dbReference>
<dbReference type="CDD" id="cd04334">
    <property type="entry name" value="ProRS-INS"/>
    <property type="match status" value="1"/>
</dbReference>
<dbReference type="CDD" id="cd00861">
    <property type="entry name" value="ProRS_anticodon_short"/>
    <property type="match status" value="1"/>
</dbReference>
<dbReference type="CDD" id="cd00779">
    <property type="entry name" value="ProRS_core_prok"/>
    <property type="match status" value="1"/>
</dbReference>
<dbReference type="FunFam" id="3.30.930.10:FF:000012">
    <property type="entry name" value="Proline--tRNA ligase"/>
    <property type="match status" value="1"/>
</dbReference>
<dbReference type="Gene3D" id="3.40.50.800">
    <property type="entry name" value="Anticodon-binding domain"/>
    <property type="match status" value="1"/>
</dbReference>
<dbReference type="Gene3D" id="3.30.930.10">
    <property type="entry name" value="Bira Bifunctional Protein, Domain 2"/>
    <property type="match status" value="2"/>
</dbReference>
<dbReference type="HAMAP" id="MF_01569">
    <property type="entry name" value="Pro_tRNA_synth_type1"/>
    <property type="match status" value="1"/>
</dbReference>
<dbReference type="InterPro" id="IPR002314">
    <property type="entry name" value="aa-tRNA-synt_IIb"/>
</dbReference>
<dbReference type="InterPro" id="IPR006195">
    <property type="entry name" value="aa-tRNA-synth_II"/>
</dbReference>
<dbReference type="InterPro" id="IPR045864">
    <property type="entry name" value="aa-tRNA-synth_II/BPL/LPL"/>
</dbReference>
<dbReference type="InterPro" id="IPR004154">
    <property type="entry name" value="Anticodon-bd"/>
</dbReference>
<dbReference type="InterPro" id="IPR036621">
    <property type="entry name" value="Anticodon-bd_dom_sf"/>
</dbReference>
<dbReference type="InterPro" id="IPR002316">
    <property type="entry name" value="Pro-tRNA-ligase_IIa"/>
</dbReference>
<dbReference type="InterPro" id="IPR004500">
    <property type="entry name" value="Pro-tRNA-synth_IIa_bac-type"/>
</dbReference>
<dbReference type="InterPro" id="IPR023717">
    <property type="entry name" value="Pro-tRNA-Synthase_IIa_type1"/>
</dbReference>
<dbReference type="InterPro" id="IPR050062">
    <property type="entry name" value="Pro-tRNA_synthetase"/>
</dbReference>
<dbReference type="InterPro" id="IPR044140">
    <property type="entry name" value="ProRS_anticodon_short"/>
</dbReference>
<dbReference type="InterPro" id="IPR033730">
    <property type="entry name" value="ProRS_core_prok"/>
</dbReference>
<dbReference type="InterPro" id="IPR036754">
    <property type="entry name" value="YbaK/aa-tRNA-synt-asso_dom_sf"/>
</dbReference>
<dbReference type="InterPro" id="IPR007214">
    <property type="entry name" value="YbaK/aa-tRNA-synth-assoc-dom"/>
</dbReference>
<dbReference type="NCBIfam" id="NF006625">
    <property type="entry name" value="PRK09194.1"/>
    <property type="match status" value="1"/>
</dbReference>
<dbReference type="NCBIfam" id="TIGR00409">
    <property type="entry name" value="proS_fam_II"/>
    <property type="match status" value="1"/>
</dbReference>
<dbReference type="PANTHER" id="PTHR42753">
    <property type="entry name" value="MITOCHONDRIAL RIBOSOME PROTEIN L39/PROLYL-TRNA LIGASE FAMILY MEMBER"/>
    <property type="match status" value="1"/>
</dbReference>
<dbReference type="PANTHER" id="PTHR42753:SF2">
    <property type="entry name" value="PROLINE--TRNA LIGASE"/>
    <property type="match status" value="1"/>
</dbReference>
<dbReference type="Pfam" id="PF03129">
    <property type="entry name" value="HGTP_anticodon"/>
    <property type="match status" value="1"/>
</dbReference>
<dbReference type="Pfam" id="PF00587">
    <property type="entry name" value="tRNA-synt_2b"/>
    <property type="match status" value="1"/>
</dbReference>
<dbReference type="Pfam" id="PF04073">
    <property type="entry name" value="tRNA_edit"/>
    <property type="match status" value="1"/>
</dbReference>
<dbReference type="PRINTS" id="PR01046">
    <property type="entry name" value="TRNASYNTHPRO"/>
</dbReference>
<dbReference type="SUPFAM" id="SSF52954">
    <property type="entry name" value="Class II aaRS ABD-related"/>
    <property type="match status" value="1"/>
</dbReference>
<dbReference type="SUPFAM" id="SSF55681">
    <property type="entry name" value="Class II aaRS and biotin synthetases"/>
    <property type="match status" value="1"/>
</dbReference>
<dbReference type="SUPFAM" id="SSF55826">
    <property type="entry name" value="YbaK/ProRS associated domain"/>
    <property type="match status" value="1"/>
</dbReference>
<dbReference type="PROSITE" id="PS50862">
    <property type="entry name" value="AA_TRNA_LIGASE_II"/>
    <property type="match status" value="1"/>
</dbReference>
<keyword id="KW-0030">Aminoacyl-tRNA synthetase</keyword>
<keyword id="KW-0067">ATP-binding</keyword>
<keyword id="KW-0963">Cytoplasm</keyword>
<keyword id="KW-0436">Ligase</keyword>
<keyword id="KW-0547">Nucleotide-binding</keyword>
<keyword id="KW-0648">Protein biosynthesis</keyword>
<keyword id="KW-1185">Reference proteome</keyword>
<feature type="chain" id="PRO_1000069172" description="Proline--tRNA ligase">
    <location>
        <begin position="1"/>
        <end position="560"/>
    </location>
</feature>
<evidence type="ECO:0000255" key="1">
    <source>
        <dbReference type="HAMAP-Rule" id="MF_01569"/>
    </source>
</evidence>
<comment type="function">
    <text evidence="1">Catalyzes the attachment of proline to tRNA(Pro) in a two-step reaction: proline is first activated by ATP to form Pro-AMP and then transferred to the acceptor end of tRNA(Pro). As ProRS can inadvertently accommodate and process non-cognate amino acids such as alanine and cysteine, to avoid such errors it has two additional distinct editing activities against alanine. One activity is designated as 'pretransfer' editing and involves the tRNA(Pro)-independent hydrolysis of activated Ala-AMP. The other activity is designated 'posttransfer' editing and involves deacylation of mischarged Ala-tRNA(Pro). The misacylated Cys-tRNA(Pro) is not edited by ProRS.</text>
</comment>
<comment type="catalytic activity">
    <reaction evidence="1">
        <text>tRNA(Pro) + L-proline + ATP = L-prolyl-tRNA(Pro) + AMP + diphosphate</text>
        <dbReference type="Rhea" id="RHEA:14305"/>
        <dbReference type="Rhea" id="RHEA-COMP:9700"/>
        <dbReference type="Rhea" id="RHEA-COMP:9702"/>
        <dbReference type="ChEBI" id="CHEBI:30616"/>
        <dbReference type="ChEBI" id="CHEBI:33019"/>
        <dbReference type="ChEBI" id="CHEBI:60039"/>
        <dbReference type="ChEBI" id="CHEBI:78442"/>
        <dbReference type="ChEBI" id="CHEBI:78532"/>
        <dbReference type="ChEBI" id="CHEBI:456215"/>
        <dbReference type="EC" id="6.1.1.15"/>
    </reaction>
</comment>
<comment type="subunit">
    <text evidence="1">Homodimer.</text>
</comment>
<comment type="subcellular location">
    <subcellularLocation>
        <location evidence="1">Cytoplasm</location>
    </subcellularLocation>
</comment>
<comment type="domain">
    <text evidence="1">Consists of three domains: the N-terminal catalytic domain, the editing domain and the C-terminal anticodon-binding domain.</text>
</comment>
<comment type="similarity">
    <text evidence="1">Belongs to the class-II aminoacyl-tRNA synthetase family. ProS type 1 subfamily.</text>
</comment>
<gene>
    <name evidence="1" type="primary">proS</name>
    <name type="ordered locus">COSY_0329</name>
</gene>
<organism>
    <name type="scientific">Vesicomyosocius okutanii subsp. Calyptogena okutanii (strain HA)</name>
    <dbReference type="NCBI Taxonomy" id="412965"/>
    <lineage>
        <taxon>Bacteria</taxon>
        <taxon>Pseudomonadati</taxon>
        <taxon>Pseudomonadota</taxon>
        <taxon>Gammaproteobacteria</taxon>
        <taxon>Candidatus Pseudothioglobaceae</taxon>
        <taxon>Candidatus Vesicomyosocius</taxon>
    </lineage>
</organism>
<reference key="1">
    <citation type="journal article" date="2007" name="Curr. Biol.">
        <title>Reduced genome of the thioautotrophic intracellular symbiont in a deep-sea clam, Calyptogena okutanii.</title>
        <authorList>
            <person name="Kuwahara H."/>
            <person name="Yoshida T."/>
            <person name="Takaki Y."/>
            <person name="Shimamura S."/>
            <person name="Nishi S."/>
            <person name="Harada M."/>
            <person name="Matsuyama K."/>
            <person name="Takishita K."/>
            <person name="Kawato M."/>
            <person name="Uematsu K."/>
            <person name="Fujiwara Y."/>
            <person name="Sato T."/>
            <person name="Kato C."/>
            <person name="Kitagawa M."/>
            <person name="Kato I."/>
            <person name="Maruyama T."/>
        </authorList>
    </citation>
    <scope>NUCLEOTIDE SEQUENCE [LARGE SCALE GENOMIC DNA]</scope>
    <source>
        <strain>HA</strain>
    </source>
</reference>
<proteinExistence type="inferred from homology"/>